<reference key="1">
    <citation type="submission" date="2005-11" db="EMBL/GenBank/DDBJ databases">
        <authorList>
            <consortium name="NIH - Mammalian Gene Collection (MGC) project"/>
        </authorList>
    </citation>
    <scope>NUCLEOTIDE SEQUENCE [LARGE SCALE MRNA]</scope>
    <source>
        <strain>Crossbred X Angus</strain>
        <tissue>Liver</tissue>
    </source>
</reference>
<feature type="chain" id="PRO_0000279457" description="Spermatogenesis-associated protein 46">
    <location>
        <begin position="1"/>
        <end position="247"/>
    </location>
</feature>
<feature type="region of interest" description="Disordered" evidence="2">
    <location>
        <begin position="125"/>
        <end position="164"/>
    </location>
</feature>
<feature type="compositionally biased region" description="Polar residues" evidence="2">
    <location>
        <begin position="137"/>
        <end position="147"/>
    </location>
</feature>
<comment type="function">
    <text evidence="1">Plays a role in spermiogenesis and fertilization.</text>
</comment>
<comment type="subcellular location">
    <subcellularLocation>
        <location evidence="1">Nucleus membrane</location>
    </subcellularLocation>
    <text evidence="1">Located throughout the subacrosomal area.</text>
</comment>
<organism>
    <name type="scientific">Bos taurus</name>
    <name type="common">Bovine</name>
    <dbReference type="NCBI Taxonomy" id="9913"/>
    <lineage>
        <taxon>Eukaryota</taxon>
        <taxon>Metazoa</taxon>
        <taxon>Chordata</taxon>
        <taxon>Craniata</taxon>
        <taxon>Vertebrata</taxon>
        <taxon>Euteleostomi</taxon>
        <taxon>Mammalia</taxon>
        <taxon>Eutheria</taxon>
        <taxon>Laurasiatheria</taxon>
        <taxon>Artiodactyla</taxon>
        <taxon>Ruminantia</taxon>
        <taxon>Pecora</taxon>
        <taxon>Bovidae</taxon>
        <taxon>Bovinae</taxon>
        <taxon>Bos</taxon>
    </lineage>
</organism>
<sequence>MENFSLLSISGTRISSSALSTLPDIMSSRATSLPDIAKPVLPTEVPSPVQALPPQCPGGVLRHGVHNIVISPDCILGDAPNGEQLRWNCTIYRPWFSPYSYFLCKDKESHLETYSFSEVQRDEGQRDSCLPEDTADSVCSSSPSPENTCPREATKKSRPGPDTTDSITFQDILMASKWHPAQQNGYKCASCCRLYPTLHSLKSHIKRGFKEGFSCKVYYHKLKTLWYKEQKARPGDRLSLGSGQAFR</sequence>
<gene>
    <name type="primary">SPATA46</name>
</gene>
<dbReference type="EMBL" id="BC110262">
    <property type="protein sequence ID" value="AAI10263.1"/>
    <property type="molecule type" value="mRNA"/>
</dbReference>
<dbReference type="RefSeq" id="NP_001039925.1">
    <property type="nucleotide sequence ID" value="NM_001046460.2"/>
</dbReference>
<dbReference type="FunCoup" id="Q2YDE2">
    <property type="interactions" value="15"/>
</dbReference>
<dbReference type="STRING" id="9913.ENSBTAP00000013422"/>
<dbReference type="PaxDb" id="9913-ENSBTAP00000013422"/>
<dbReference type="GeneID" id="539685"/>
<dbReference type="KEGG" id="bta:539685"/>
<dbReference type="CTD" id="284680"/>
<dbReference type="VEuPathDB" id="HostDB:ENSBTAG00000010174"/>
<dbReference type="eggNOG" id="ENOG502S3KA">
    <property type="taxonomic scope" value="Eukaryota"/>
</dbReference>
<dbReference type="HOGENOM" id="CLU_073753_0_0_1"/>
<dbReference type="InParanoid" id="Q2YDE2"/>
<dbReference type="OMA" id="QYQSITV"/>
<dbReference type="OrthoDB" id="8898641at2759"/>
<dbReference type="TreeFam" id="TF337124"/>
<dbReference type="Proteomes" id="UP000009136">
    <property type="component" value="Chromosome 3"/>
</dbReference>
<dbReference type="Bgee" id="ENSBTAG00000010174">
    <property type="expression patterns" value="Expressed in semen and 60 other cell types or tissues"/>
</dbReference>
<dbReference type="GO" id="GO:0031965">
    <property type="term" value="C:nuclear membrane"/>
    <property type="evidence" value="ECO:0000250"/>
    <property type="project" value="UniProtKB"/>
</dbReference>
<dbReference type="GO" id="GO:0030154">
    <property type="term" value="P:cell differentiation"/>
    <property type="evidence" value="ECO:0007669"/>
    <property type="project" value="UniProtKB-KW"/>
</dbReference>
<dbReference type="GO" id="GO:0009566">
    <property type="term" value="P:fertilization"/>
    <property type="evidence" value="ECO:0000318"/>
    <property type="project" value="GO_Central"/>
</dbReference>
<dbReference type="GO" id="GO:0007342">
    <property type="term" value="P:fusion of sperm to egg plasma membrane involved in single fertilization"/>
    <property type="evidence" value="ECO:0000250"/>
    <property type="project" value="UniProtKB"/>
</dbReference>
<dbReference type="GO" id="GO:0007283">
    <property type="term" value="P:spermatogenesis"/>
    <property type="evidence" value="ECO:0000250"/>
    <property type="project" value="UniProtKB"/>
</dbReference>
<dbReference type="InterPro" id="IPR040879">
    <property type="entry name" value="Spt46-like"/>
</dbReference>
<dbReference type="PANTHER" id="PTHR33517">
    <property type="entry name" value="PROTEIN FAM170B-RELATED"/>
    <property type="match status" value="1"/>
</dbReference>
<dbReference type="PANTHER" id="PTHR33517:SF4">
    <property type="entry name" value="SPERMATOGENESIS-ASSOCIATED PROTEIN 46"/>
    <property type="match status" value="1"/>
</dbReference>
<dbReference type="Pfam" id="PF17734">
    <property type="entry name" value="Spt46"/>
    <property type="match status" value="1"/>
</dbReference>
<protein>
    <recommendedName>
        <fullName>Spermatogenesis-associated protein 46</fullName>
    </recommendedName>
</protein>
<name>SPT46_BOVIN</name>
<proteinExistence type="evidence at transcript level"/>
<accession>Q2YDE2</accession>
<evidence type="ECO:0000250" key="1">
    <source>
        <dbReference type="UniProtKB" id="Q4FZF2"/>
    </source>
</evidence>
<evidence type="ECO:0000256" key="2">
    <source>
        <dbReference type="SAM" id="MobiDB-lite"/>
    </source>
</evidence>
<keyword id="KW-0221">Differentiation</keyword>
<keyword id="KW-0472">Membrane</keyword>
<keyword id="KW-0539">Nucleus</keyword>
<keyword id="KW-1185">Reference proteome</keyword>
<keyword id="KW-0744">Spermatogenesis</keyword>